<name>ATP6_TERTT</name>
<dbReference type="EMBL" id="CP001614">
    <property type="protein sequence ID" value="ACR11282.1"/>
    <property type="molecule type" value="Genomic_DNA"/>
</dbReference>
<dbReference type="RefSeq" id="WP_015817394.1">
    <property type="nucleotide sequence ID" value="NC_012997.1"/>
</dbReference>
<dbReference type="SMR" id="C5BKK1"/>
<dbReference type="STRING" id="377629.TERTU_4722"/>
<dbReference type="KEGG" id="ttu:TERTU_4722"/>
<dbReference type="eggNOG" id="COG0356">
    <property type="taxonomic scope" value="Bacteria"/>
</dbReference>
<dbReference type="HOGENOM" id="CLU_041018_1_0_6"/>
<dbReference type="OrthoDB" id="9789241at2"/>
<dbReference type="Proteomes" id="UP000009080">
    <property type="component" value="Chromosome"/>
</dbReference>
<dbReference type="GO" id="GO:0005886">
    <property type="term" value="C:plasma membrane"/>
    <property type="evidence" value="ECO:0007669"/>
    <property type="project" value="UniProtKB-SubCell"/>
</dbReference>
<dbReference type="GO" id="GO:0045259">
    <property type="term" value="C:proton-transporting ATP synthase complex"/>
    <property type="evidence" value="ECO:0007669"/>
    <property type="project" value="UniProtKB-KW"/>
</dbReference>
<dbReference type="GO" id="GO:0046933">
    <property type="term" value="F:proton-transporting ATP synthase activity, rotational mechanism"/>
    <property type="evidence" value="ECO:0007669"/>
    <property type="project" value="UniProtKB-UniRule"/>
</dbReference>
<dbReference type="GO" id="GO:0042777">
    <property type="term" value="P:proton motive force-driven plasma membrane ATP synthesis"/>
    <property type="evidence" value="ECO:0007669"/>
    <property type="project" value="TreeGrafter"/>
</dbReference>
<dbReference type="CDD" id="cd00310">
    <property type="entry name" value="ATP-synt_Fo_a_6"/>
    <property type="match status" value="1"/>
</dbReference>
<dbReference type="FunFam" id="1.20.120.220:FF:000002">
    <property type="entry name" value="ATP synthase subunit a"/>
    <property type="match status" value="1"/>
</dbReference>
<dbReference type="Gene3D" id="1.20.120.220">
    <property type="entry name" value="ATP synthase, F0 complex, subunit A"/>
    <property type="match status" value="1"/>
</dbReference>
<dbReference type="HAMAP" id="MF_01393">
    <property type="entry name" value="ATP_synth_a_bact"/>
    <property type="match status" value="1"/>
</dbReference>
<dbReference type="InterPro" id="IPR045082">
    <property type="entry name" value="ATP_syn_F0_a_bact/chloroplast"/>
</dbReference>
<dbReference type="InterPro" id="IPR000568">
    <property type="entry name" value="ATP_synth_F0_asu"/>
</dbReference>
<dbReference type="InterPro" id="IPR023011">
    <property type="entry name" value="ATP_synth_F0_asu_AS"/>
</dbReference>
<dbReference type="InterPro" id="IPR035908">
    <property type="entry name" value="F0_ATP_A_sf"/>
</dbReference>
<dbReference type="NCBIfam" id="TIGR01131">
    <property type="entry name" value="ATP_synt_6_or_A"/>
    <property type="match status" value="1"/>
</dbReference>
<dbReference type="NCBIfam" id="NF004477">
    <property type="entry name" value="PRK05815.1-1"/>
    <property type="match status" value="1"/>
</dbReference>
<dbReference type="PANTHER" id="PTHR42823">
    <property type="entry name" value="ATP SYNTHASE SUBUNIT A, CHLOROPLASTIC"/>
    <property type="match status" value="1"/>
</dbReference>
<dbReference type="PANTHER" id="PTHR42823:SF3">
    <property type="entry name" value="ATP SYNTHASE SUBUNIT A, CHLOROPLASTIC"/>
    <property type="match status" value="1"/>
</dbReference>
<dbReference type="Pfam" id="PF00119">
    <property type="entry name" value="ATP-synt_A"/>
    <property type="match status" value="1"/>
</dbReference>
<dbReference type="SUPFAM" id="SSF81336">
    <property type="entry name" value="F1F0 ATP synthase subunit A"/>
    <property type="match status" value="1"/>
</dbReference>
<dbReference type="PROSITE" id="PS00449">
    <property type="entry name" value="ATPASE_A"/>
    <property type="match status" value="1"/>
</dbReference>
<keyword id="KW-0066">ATP synthesis</keyword>
<keyword id="KW-0997">Cell inner membrane</keyword>
<keyword id="KW-1003">Cell membrane</keyword>
<keyword id="KW-0138">CF(0)</keyword>
<keyword id="KW-0375">Hydrogen ion transport</keyword>
<keyword id="KW-0406">Ion transport</keyword>
<keyword id="KW-0472">Membrane</keyword>
<keyword id="KW-1185">Reference proteome</keyword>
<keyword id="KW-0812">Transmembrane</keyword>
<keyword id="KW-1133">Transmembrane helix</keyword>
<keyword id="KW-0813">Transport</keyword>
<feature type="chain" id="PRO_1000215156" description="ATP synthase subunit a">
    <location>
        <begin position="1"/>
        <end position="311"/>
    </location>
</feature>
<feature type="transmembrane region" description="Helical" evidence="1">
    <location>
        <begin position="62"/>
        <end position="82"/>
    </location>
</feature>
<feature type="transmembrane region" description="Helical" evidence="1">
    <location>
        <begin position="123"/>
        <end position="143"/>
    </location>
</feature>
<feature type="transmembrane region" description="Helical" evidence="1">
    <location>
        <begin position="179"/>
        <end position="199"/>
    </location>
</feature>
<feature type="transmembrane region" description="Helical" evidence="1">
    <location>
        <begin position="213"/>
        <end position="233"/>
    </location>
</feature>
<feature type="transmembrane region" description="Helical" evidence="1">
    <location>
        <begin position="253"/>
        <end position="273"/>
    </location>
</feature>
<feature type="transmembrane region" description="Helical" evidence="1">
    <location>
        <begin position="276"/>
        <end position="296"/>
    </location>
</feature>
<gene>
    <name evidence="1" type="primary">atpB</name>
    <name type="ordered locus">TERTU_4722</name>
</gene>
<protein>
    <recommendedName>
        <fullName evidence="1">ATP synthase subunit a</fullName>
    </recommendedName>
    <alternativeName>
        <fullName evidence="1">ATP synthase F0 sector subunit a</fullName>
    </alternativeName>
    <alternativeName>
        <fullName evidence="1">F-ATPase subunit 6</fullName>
    </alternativeName>
</protein>
<proteinExistence type="inferred from homology"/>
<organism>
    <name type="scientific">Teredinibacter turnerae (strain ATCC 39867 / T7901)</name>
    <dbReference type="NCBI Taxonomy" id="377629"/>
    <lineage>
        <taxon>Bacteria</taxon>
        <taxon>Pseudomonadati</taxon>
        <taxon>Pseudomonadota</taxon>
        <taxon>Gammaproteobacteria</taxon>
        <taxon>Cellvibrionales</taxon>
        <taxon>Cellvibrionaceae</taxon>
        <taxon>Teredinibacter</taxon>
    </lineage>
</organism>
<comment type="function">
    <text evidence="1">Key component of the proton channel; it plays a direct role in the translocation of protons across the membrane.</text>
</comment>
<comment type="subunit">
    <text evidence="1">F-type ATPases have 2 components, CF(1) - the catalytic core - and CF(0) - the membrane proton channel. CF(1) has five subunits: alpha(3), beta(3), gamma(1), delta(1), epsilon(1). CF(0) has three main subunits: a(1), b(2) and c(9-12). The alpha and beta chains form an alternating ring which encloses part of the gamma chain. CF(1) is attached to CF(0) by a central stalk formed by the gamma and epsilon chains, while a peripheral stalk is formed by the delta and b chains.</text>
</comment>
<comment type="subcellular location">
    <subcellularLocation>
        <location evidence="1">Cell inner membrane</location>
        <topology evidence="1">Multi-pass membrane protein</topology>
    </subcellularLocation>
</comment>
<comment type="similarity">
    <text evidence="1">Belongs to the ATPase A chain family.</text>
</comment>
<sequence length="311" mass="34968">MASSETLTITDYITHHLQNMTYGKLPAGYARHHADGEVHVLEHDTWTMAHTAEEAAAMGFNAVHVDTLGWGIFLALVVGFFMRRVAVKATTDTPRGMASFIEFLVEGINGVVKDVFHHKNRLVAPMAITVFSWVFMMNLMDLIPVDWLPMAAQIVSGNEHLFFKVVPTTDPNATLGMAVTVFILMLFFSVQQKGLWGFIKELTCHPFFAPRKFWYFNLILIPFNFILETVALIAKPISLGLRLFGNLYAGEMIFILIATLFSVGLLFGFLGGILQFGWAVLHILVILIQAFVFMVLTTVYMAMAHDRHDEH</sequence>
<evidence type="ECO:0000255" key="1">
    <source>
        <dbReference type="HAMAP-Rule" id="MF_01393"/>
    </source>
</evidence>
<accession>C5BKK1</accession>
<reference key="1">
    <citation type="journal article" date="2009" name="PLoS ONE">
        <title>The complete genome of Teredinibacter turnerae T7901: an intracellular endosymbiont of marine wood-boring bivalves (shipworms).</title>
        <authorList>
            <person name="Yang J.C."/>
            <person name="Madupu R."/>
            <person name="Durkin A.S."/>
            <person name="Ekborg N.A."/>
            <person name="Pedamallu C.S."/>
            <person name="Hostetler J.B."/>
            <person name="Radune D."/>
            <person name="Toms B.S."/>
            <person name="Henrissat B."/>
            <person name="Coutinho P.M."/>
            <person name="Schwarz S."/>
            <person name="Field L."/>
            <person name="Trindade-Silva A.E."/>
            <person name="Soares C.A.G."/>
            <person name="Elshahawi S."/>
            <person name="Hanora A."/>
            <person name="Schmidt E.W."/>
            <person name="Haygood M.G."/>
            <person name="Posfai J."/>
            <person name="Benner J."/>
            <person name="Madinger C."/>
            <person name="Nove J."/>
            <person name="Anton B."/>
            <person name="Chaudhary K."/>
            <person name="Foster J."/>
            <person name="Holman A."/>
            <person name="Kumar S."/>
            <person name="Lessard P.A."/>
            <person name="Luyten Y.A."/>
            <person name="Slatko B."/>
            <person name="Wood N."/>
            <person name="Wu B."/>
            <person name="Teplitski M."/>
            <person name="Mougous J.D."/>
            <person name="Ward N."/>
            <person name="Eisen J.A."/>
            <person name="Badger J.H."/>
            <person name="Distel D.L."/>
        </authorList>
    </citation>
    <scope>NUCLEOTIDE SEQUENCE [LARGE SCALE GENOMIC DNA]</scope>
    <source>
        <strain>ATCC 39867 / T7901</strain>
    </source>
</reference>